<comment type="function">
    <text evidence="3 6">Transcription factore; part of the gene cluster that mediates the biosynthesis of the antihypercholesterolemic agents phomoidrides which are dimeric anhydrides (PubMed:26558485). Probably regulates the expression of the genes from the cluster (Probable).</text>
</comment>
<comment type="subcellular location">
    <subcellularLocation>
        <location evidence="1">Nucleus</location>
    </subcellularLocation>
</comment>
<comment type="biotechnology">
    <text evidence="4">Phomoidrides A and B (also known as CP-225,917 and CP-263,114) are potent inhibitors of Ras farnesyltransferase and squalene synthase (PubMed:9066758). CP-225,917 and CP-263,114 inhibit Ras farnesyl transferase from rat brain with IC(50) values of 6 uM and 20 uoM, respectively (PubMed:9066758). CP-225,917 inhibits squalene synthase with an IC(50) value of 43 uM and CP-263,114 with an IC(50) of 160 uM (PubMed:9066758).</text>
</comment>
<evidence type="ECO:0000255" key="1">
    <source>
        <dbReference type="PROSITE-ProRule" id="PRU00227"/>
    </source>
</evidence>
<evidence type="ECO:0000256" key="2">
    <source>
        <dbReference type="SAM" id="MobiDB-lite"/>
    </source>
</evidence>
<evidence type="ECO:0000269" key="3">
    <source>
    </source>
</evidence>
<evidence type="ECO:0000269" key="4">
    <source>
    </source>
</evidence>
<evidence type="ECO:0000303" key="5">
    <source>
    </source>
</evidence>
<evidence type="ECO:0000305" key="6">
    <source>
    </source>
</evidence>
<reference key="1">
    <citation type="submission" date="2007-10" db="EMBL/GenBank/DDBJ databases">
        <authorList>
            <person name="Zhao H."/>
            <person name="Waite J.H."/>
        </authorList>
    </citation>
    <scope>NUCLEOTIDE SEQUENCE [GENOMIC DNA]</scope>
    <source>
        <strain>ATCC 10500 / CBS 375.48 / QM 6759 / NRRL 1006</strain>
    </source>
</reference>
<reference key="2">
    <citation type="journal article" date="2015" name="Genome Announc.">
        <title>Genome sequence of the AIDS-associated pathogen Penicillium marneffei (ATCC18224) and its near taxonomic relative Talaromyces stipitatus (ATCC10500).</title>
        <authorList>
            <person name="Nierman W.C."/>
            <person name="Fedorova-Abrams N.D."/>
            <person name="Andrianopoulos A."/>
        </authorList>
    </citation>
    <scope>NUCLEOTIDE SEQUENCE [LARGE SCALE GENOMIC DNA]</scope>
    <source>
        <strain>ATCC 10500 / CBS 375.48 / QM 6759 / NRRL 1006</strain>
    </source>
</reference>
<reference key="3">
    <citation type="journal article" date="1997" name="J. Antibiot.">
        <title>CP-225,917 and CP-263,114, novel Ras farnesylation inhibitors from an unidentified fungus. I. Taxonomy, fermentation, isolation, and biochemical properties.</title>
        <authorList>
            <person name="Dabrah T.T."/>
            <person name="Harwood H.J. Jr."/>
            <person name="Huang L.H."/>
            <person name="Jankovich N.D."/>
            <person name="Kaneko T."/>
            <person name="Li J.C."/>
            <person name="Lindsey S."/>
            <person name="Moshier P.M."/>
            <person name="Subashi T.A."/>
            <person name="Therrien M."/>
            <person name="Watts P.C."/>
        </authorList>
    </citation>
    <scope>BIOTECHNOLOGY</scope>
</reference>
<reference key="4">
    <citation type="journal article" date="2015" name="Org. Lett.">
        <title>Biosynthetic study on antihypercholesterolemic agent phomoidride: general biogenesis of fungal dimeric anhydrides.</title>
        <authorList>
            <person name="Fujii R."/>
            <person name="Matsu Y."/>
            <person name="Minami A."/>
            <person name="Nagamine S."/>
            <person name="Takeuchi I."/>
            <person name="Gomi K."/>
            <person name="Oikawa H."/>
        </authorList>
    </citation>
    <scope>IDENTIFICATION</scope>
    <scope>FUNCTION</scope>
</reference>
<protein>
    <recommendedName>
        <fullName evidence="5">Transcription factor tstO</fullName>
    </recommendedName>
    <alternativeName>
        <fullName evidence="5">Phomoidride biosynthesis cluster protein O</fullName>
    </alternativeName>
</protein>
<dbReference type="EMBL" id="EQ962657">
    <property type="protein sequence ID" value="EED15403.1"/>
    <property type="molecule type" value="Genomic_DNA"/>
</dbReference>
<dbReference type="EMBL" id="EQ962657">
    <property type="protein sequence ID" value="EED15404.1"/>
    <property type="molecule type" value="Genomic_DNA"/>
</dbReference>
<dbReference type="RefSeq" id="XP_002485356.1">
    <property type="nucleotide sequence ID" value="XM_002485311.1"/>
</dbReference>
<dbReference type="RefSeq" id="XP_002485357.1">
    <property type="nucleotide sequence ID" value="XM_002485312.1"/>
</dbReference>
<dbReference type="SMR" id="B8MKY7"/>
<dbReference type="GeneID" id="8107026"/>
<dbReference type="VEuPathDB" id="FungiDB:TSTA_048440"/>
<dbReference type="HOGENOM" id="CLU_487601_0_0_1"/>
<dbReference type="InParanoid" id="B8MKY7"/>
<dbReference type="OMA" id="VYSHARP"/>
<dbReference type="OrthoDB" id="4227529at2759"/>
<dbReference type="Proteomes" id="UP000001745">
    <property type="component" value="Unassembled WGS sequence"/>
</dbReference>
<dbReference type="GO" id="GO:0005634">
    <property type="term" value="C:nucleus"/>
    <property type="evidence" value="ECO:0007669"/>
    <property type="project" value="UniProtKB-SubCell"/>
</dbReference>
<dbReference type="GO" id="GO:0003677">
    <property type="term" value="F:DNA binding"/>
    <property type="evidence" value="ECO:0007669"/>
    <property type="project" value="UniProtKB-KW"/>
</dbReference>
<dbReference type="GO" id="GO:0000981">
    <property type="term" value="F:DNA-binding transcription factor activity, RNA polymerase II-specific"/>
    <property type="evidence" value="ECO:0007669"/>
    <property type="project" value="InterPro"/>
</dbReference>
<dbReference type="GO" id="GO:0008270">
    <property type="term" value="F:zinc ion binding"/>
    <property type="evidence" value="ECO:0007669"/>
    <property type="project" value="InterPro"/>
</dbReference>
<dbReference type="CDD" id="cd00067">
    <property type="entry name" value="GAL4"/>
    <property type="match status" value="1"/>
</dbReference>
<dbReference type="Gene3D" id="4.10.240.10">
    <property type="entry name" value="Zn(2)-C6 fungal-type DNA-binding domain"/>
    <property type="match status" value="1"/>
</dbReference>
<dbReference type="InterPro" id="IPR050675">
    <property type="entry name" value="OAF3"/>
</dbReference>
<dbReference type="InterPro" id="IPR036864">
    <property type="entry name" value="Zn2-C6_fun-type_DNA-bd_sf"/>
</dbReference>
<dbReference type="InterPro" id="IPR001138">
    <property type="entry name" value="Zn2Cys6_DnaBD"/>
</dbReference>
<dbReference type="PANTHER" id="PTHR31069:SF31">
    <property type="entry name" value="MONODICTYPHENONE CLUSTER TRANSCRIPTION FACTOR-RELATED"/>
    <property type="match status" value="1"/>
</dbReference>
<dbReference type="PANTHER" id="PTHR31069">
    <property type="entry name" value="OLEATE-ACTIVATED TRANSCRIPTION FACTOR 1-RELATED"/>
    <property type="match status" value="1"/>
</dbReference>
<dbReference type="Pfam" id="PF00172">
    <property type="entry name" value="Zn_clus"/>
    <property type="match status" value="1"/>
</dbReference>
<dbReference type="PRINTS" id="PR00755">
    <property type="entry name" value="AFLATOXINBRP"/>
</dbReference>
<dbReference type="SMART" id="SM00066">
    <property type="entry name" value="GAL4"/>
    <property type="match status" value="1"/>
</dbReference>
<dbReference type="SUPFAM" id="SSF57701">
    <property type="entry name" value="Zn2/Cys6 DNA-binding domain"/>
    <property type="match status" value="1"/>
</dbReference>
<dbReference type="PROSITE" id="PS50048">
    <property type="entry name" value="ZN2_CY6_FUNGAL_2"/>
    <property type="match status" value="1"/>
</dbReference>
<name>TSTO_TALSN</name>
<keyword id="KW-0238">DNA-binding</keyword>
<keyword id="KW-0479">Metal-binding</keyword>
<keyword id="KW-0539">Nucleus</keyword>
<keyword id="KW-1185">Reference proteome</keyword>
<keyword id="KW-0804">Transcription</keyword>
<keyword id="KW-0805">Transcription regulation</keyword>
<keyword id="KW-0862">Zinc</keyword>
<proteinExistence type="evidence at protein level"/>
<accession>B8MKY7</accession>
<organism>
    <name type="scientific">Talaromyces stipitatus (strain ATCC 10500 / CBS 375.48 / QM 6759 / NRRL 1006)</name>
    <name type="common">Penicillium stipitatum</name>
    <dbReference type="NCBI Taxonomy" id="441959"/>
    <lineage>
        <taxon>Eukaryota</taxon>
        <taxon>Fungi</taxon>
        <taxon>Dikarya</taxon>
        <taxon>Ascomycota</taxon>
        <taxon>Pezizomycotina</taxon>
        <taxon>Eurotiomycetes</taxon>
        <taxon>Eurotiomycetidae</taxon>
        <taxon>Eurotiales</taxon>
        <taxon>Trichocomaceae</taxon>
        <taxon>Talaromyces</taxon>
        <taxon>Talaromyces sect. Talaromyces</taxon>
    </lineage>
</organism>
<feature type="chain" id="PRO_0000458959" description="Transcription factor tstO">
    <location>
        <begin position="1"/>
        <end position="559"/>
    </location>
</feature>
<feature type="DNA-binding region" description="Zn(2)-C6 fungal-type" evidence="1">
    <location>
        <begin position="23"/>
        <end position="50"/>
    </location>
</feature>
<feature type="region of interest" description="Disordered" evidence="2">
    <location>
        <begin position="166"/>
        <end position="316"/>
    </location>
</feature>
<feature type="region of interest" description="Disordered" evidence="2">
    <location>
        <begin position="453"/>
        <end position="477"/>
    </location>
</feature>
<feature type="compositionally biased region" description="Low complexity" evidence="2">
    <location>
        <begin position="222"/>
        <end position="232"/>
    </location>
</feature>
<feature type="compositionally biased region" description="Polar residues" evidence="2">
    <location>
        <begin position="255"/>
        <end position="267"/>
    </location>
</feature>
<feature type="compositionally biased region" description="Basic and acidic residues" evidence="2">
    <location>
        <begin position="268"/>
        <end position="279"/>
    </location>
</feature>
<feature type="compositionally biased region" description="Low complexity" evidence="2">
    <location>
        <begin position="286"/>
        <end position="316"/>
    </location>
</feature>
<feature type="compositionally biased region" description="Low complexity" evidence="2">
    <location>
        <begin position="462"/>
        <end position="477"/>
    </location>
</feature>
<sequence>MDNQSTINNNGNNKVQQKVRSACDACQSAKVRCGREKPTCRRCQNQGKTCVYSHARPLGRPRKSGSASSTTTMTTTTVNMNDLRDDAMIIAGSVNGDSEYGSPTRFRSISRVNNDHGMNMNMNNDWPGIPPLPSAGPRIPDILLDDSDENYMDMFMSVRLLGSLSGPSTVTDHHPLPPPEEEDGQEGYQNQHQHHNDPHSLIADPSAATEWDLGFPFDQHSSSESLSLEPSSAGAHPGDIPTSSLSKDGMDFTHTRGSQKISPNPHSIDSRTSSRDKSFNHHRSLSTLGSRTPNTTTTSSSASSVGLTGSSTTGFSRRFRGGGGGVLSLSRRRTECTCCDSMLQILAELDRHIADRSAISLDLIIKLEKETRAQTVAILHCDLCSQTFRPRILILSGLVLEAVVELLEEILHQHQLLGYSTATTTSNTTSSSLSSSLSSSSWIPSGPAGMELASPPPSIFDNNNTSTTTTTSSISTANRPGKTVDICSLWLGDYEISGPEKQEFLKHLLTARLRDIAATIHQLHETMNRYRHRPAFKVGTLMLGEIYRHVQAIVKTLDQ</sequence>
<gene>
    <name evidence="5" type="primary">tstO</name>
    <name type="ORF">TSTA_048440</name>
</gene>